<proteinExistence type="evidence at protein level"/>
<feature type="chain" id="PRO_0000445920" description="Alcohol dehydrogenase patD">
    <location>
        <begin position="1"/>
        <end position="340"/>
    </location>
</feature>
<feature type="binding site" evidence="2">
    <location>
        <position position="46"/>
    </location>
    <ligand>
        <name>Zn(2+)</name>
        <dbReference type="ChEBI" id="CHEBI:29105"/>
        <label>1</label>
        <note>catalytic</note>
    </ligand>
</feature>
<feature type="binding site" evidence="2">
    <location>
        <position position="47"/>
    </location>
    <ligand>
        <name>NAD(+)</name>
        <dbReference type="ChEBI" id="CHEBI:57540"/>
    </ligand>
</feature>
<feature type="binding site" evidence="1">
    <location>
        <position position="67"/>
    </location>
    <ligand>
        <name>substrate</name>
    </ligand>
</feature>
<feature type="binding site" evidence="2">
    <location>
        <position position="67"/>
    </location>
    <ligand>
        <name>Zn(2+)</name>
        <dbReference type="ChEBI" id="CHEBI:29105"/>
        <label>1</label>
        <note>catalytic</note>
    </ligand>
</feature>
<feature type="binding site" evidence="2">
    <location>
        <position position="68"/>
    </location>
    <ligand>
        <name>Zn(2+)</name>
        <dbReference type="ChEBI" id="CHEBI:29105"/>
        <label>1</label>
        <note>catalytic</note>
    </ligand>
</feature>
<feature type="binding site" evidence="2">
    <location>
        <position position="101"/>
    </location>
    <ligand>
        <name>Zn(2+)</name>
        <dbReference type="ChEBI" id="CHEBI:29105"/>
        <label>2</label>
    </ligand>
</feature>
<feature type="binding site" evidence="2">
    <location>
        <position position="104"/>
    </location>
    <ligand>
        <name>Zn(2+)</name>
        <dbReference type="ChEBI" id="CHEBI:29105"/>
        <label>2</label>
    </ligand>
</feature>
<feature type="binding site" evidence="2">
    <location>
        <position position="112"/>
    </location>
    <ligand>
        <name>Zn(2+)</name>
        <dbReference type="ChEBI" id="CHEBI:29105"/>
        <label>2</label>
    </ligand>
</feature>
<feature type="binding site" evidence="2">
    <location>
        <position position="154"/>
    </location>
    <ligand>
        <name>Zn(2+)</name>
        <dbReference type="ChEBI" id="CHEBI:29105"/>
        <label>1</label>
        <note>catalytic</note>
    </ligand>
</feature>
<feature type="binding site" evidence="2">
    <location>
        <begin position="178"/>
        <end position="183"/>
    </location>
    <ligand>
        <name>NAD(+)</name>
        <dbReference type="ChEBI" id="CHEBI:57540"/>
    </ligand>
</feature>
<feature type="binding site" evidence="2">
    <location>
        <begin position="198"/>
        <end position="203"/>
    </location>
    <ligand>
        <name>NAD(+)</name>
        <dbReference type="ChEBI" id="CHEBI:57540"/>
    </ligand>
</feature>
<feature type="binding site" evidence="2">
    <location>
        <position position="206"/>
    </location>
    <ligand>
        <name>NAD(+)</name>
        <dbReference type="ChEBI" id="CHEBI:57540"/>
    </ligand>
</feature>
<feature type="binding site" evidence="2">
    <location>
        <begin position="265"/>
        <end position="267"/>
    </location>
    <ligand>
        <name>NAD(+)</name>
        <dbReference type="ChEBI" id="CHEBI:57540"/>
    </ligand>
</feature>
<feature type="binding site" evidence="2">
    <location>
        <begin position="289"/>
        <end position="291"/>
    </location>
    <ligand>
        <name>NAD(+)</name>
        <dbReference type="ChEBI" id="CHEBI:57540"/>
    </ligand>
</feature>
<feature type="binding site" evidence="2">
    <location>
        <begin position="297"/>
        <end position="299"/>
    </location>
    <ligand>
        <name>NAD(+)</name>
        <dbReference type="ChEBI" id="CHEBI:57540"/>
    </ligand>
</feature>
<organism>
    <name type="scientific">Penicillium expansum</name>
    <name type="common">Blue mold rot fungus</name>
    <dbReference type="NCBI Taxonomy" id="27334"/>
    <lineage>
        <taxon>Eukaryota</taxon>
        <taxon>Fungi</taxon>
        <taxon>Dikarya</taxon>
        <taxon>Ascomycota</taxon>
        <taxon>Pezizomycotina</taxon>
        <taxon>Eurotiomycetes</taxon>
        <taxon>Eurotiomycetidae</taxon>
        <taxon>Eurotiales</taxon>
        <taxon>Aspergillaceae</taxon>
        <taxon>Penicillium</taxon>
    </lineage>
</organism>
<gene>
    <name evidence="11" type="primary">patD</name>
    <name type="ORF">PEX2_082780</name>
</gene>
<name>PATD_PENEN</name>
<keyword id="KW-0963">Cytoplasm</keyword>
<keyword id="KW-0479">Metal-binding</keyword>
<keyword id="KW-0520">NAD</keyword>
<keyword id="KW-0521">NADP</keyword>
<keyword id="KW-0560">Oxidoreductase</keyword>
<keyword id="KW-1185">Reference proteome</keyword>
<keyword id="KW-0862">Zinc</keyword>
<evidence type="ECO:0000250" key="1">
    <source>
        <dbReference type="UniProtKB" id="P00327"/>
    </source>
</evidence>
<evidence type="ECO:0000250" key="2">
    <source>
        <dbReference type="UniProtKB" id="Q96533"/>
    </source>
</evidence>
<evidence type="ECO:0000269" key="3">
    <source>
    </source>
</evidence>
<evidence type="ECO:0000269" key="4">
    <source>
    </source>
</evidence>
<evidence type="ECO:0000269" key="5">
    <source>
    </source>
</evidence>
<evidence type="ECO:0000269" key="6">
    <source>
    </source>
</evidence>
<evidence type="ECO:0000269" key="7">
    <source>
    </source>
</evidence>
<evidence type="ECO:0000269" key="8">
    <source>
    </source>
</evidence>
<evidence type="ECO:0000269" key="9">
    <source>
    </source>
</evidence>
<evidence type="ECO:0000269" key="10">
    <source>
    </source>
</evidence>
<evidence type="ECO:0000303" key="11">
    <source>
    </source>
</evidence>
<evidence type="ECO:0000305" key="12"/>
<evidence type="ECO:0000305" key="13">
    <source>
    </source>
</evidence>
<sequence>MASTTPSTYKQAVFKEQGAGLTLEEVALTLPKRDEILVKVEACGVCHSDHFAQTNLMGGGFPLVPGHEIIGRVAAVGEGETVWKEGDRIGGAWHGGHDGTCGACKKGFFQMCDNEQVNGISRNGGYAEYCIIRREAAVHIPDHVNAAKYAPMLCAGVTVFNAMRHMKIPPGELVAIQGLGGLGHLALQYANKFGYRVVALSRDSTKEEFARKLGAHEYIDTSREDPVAALQKLGGASLIVSTAPVPEIINPLIQGLGVMGKLLILSIVGGIEVHTGLLVGKGKSIWSWPSGHATDSEDAIAFADLHGIDCLIEEFPLDKCNEAFAAMMEGSVRFRAVITM</sequence>
<comment type="function">
    <text evidence="6 9 10 13">Alcohol dehydrogenase; part of the gene cluster that mediates the biosynthesis of patulin, an acetate-derived tetraketide mycotoxin produced by several fungal species that shows antimicrobial properties against several bacteria (PubMed:25625822, PubMed:30100914, PubMed:30680886). PatD catalyzes the conversion of neopatulin into E-ascladiol (PubMed:30680886). The pathway begins with the synthesis of 6-methylsalicylic acid by the polyketide synthase (PKS) patK via condensation of acetate and malonate units. The 6-methylsalicylic acid decarboxylase patG then catalyzes the decarboxylation of 6-methylsalicylic acid to yield m-cresol (also known as 3-methylphenol). These first reactions occur in the cytosol. The intermediate m-cresol is then transported into the endoplasmic reticulum where the cytochrome P450 monooxygenase patH converts it to m-hydroxybenzyl alcohol, which is further converted to gentisyl alcohol by the cytochrome P450 monooxygenase patI. The oxidoreductases patJ and patO further convert gentisyl alcohol to isoepoxydon in the vacuole. PatN catalyzes then the transformation of isoepoxydon into phyllostine. The cluster protein patF is responsible for the conversion from phyllostine to neopatulin whereas the alcohol dehydrogenase patD converts neopatulin to E-ascladiol. The steps between isoepoxydon and E-ascladiol occur in the cytosol, and E-ascladiol is probably secreted to the extracellular space by one of the cluster-specific transporters patC or patM. Finally, the secreted patulin synthase patE catalyzes the conversion of E-ascladiol to patulin (Probable) (PubMed:30680886).</text>
</comment>
<comment type="catalytic activity">
    <reaction evidence="10">
        <text>neopatulin + NADPH + H(+) = (E)-ascladiol + NADP(+)</text>
        <dbReference type="Rhea" id="RHEA:62224"/>
        <dbReference type="ChEBI" id="CHEBI:15378"/>
        <dbReference type="ChEBI" id="CHEBI:57783"/>
        <dbReference type="ChEBI" id="CHEBI:58349"/>
        <dbReference type="ChEBI" id="CHEBI:145111"/>
        <dbReference type="ChEBI" id="CHEBI:145112"/>
    </reaction>
    <physiologicalReaction direction="left-to-right" evidence="10">
        <dbReference type="Rhea" id="RHEA:62225"/>
    </physiologicalReaction>
</comment>
<comment type="cofactor">
    <cofactor evidence="2">
        <name>Zn(2+)</name>
        <dbReference type="ChEBI" id="CHEBI:29105"/>
    </cofactor>
    <text evidence="2">Binds 2 Zn(2+) ions per subunit.</text>
</comment>
<comment type="pathway">
    <text evidence="10">Mycotoxin biosynthesis; patulin biosynthesis.</text>
</comment>
<comment type="subcellular location">
    <subcellularLocation>
        <location evidence="10">Cytoplasm</location>
        <location evidence="10">Cytosol</location>
    </subcellularLocation>
</comment>
<comment type="induction">
    <text evidence="5 6 8 9 10">Expression is correlated with the production of patulin (PubMed:25120234). Expression is positively regulated by the secondary metabolism regulator laeA (PubMed:27528575, PubMed:30100914). Expression is strongly decreased with increased sucrose concentrations. This decrease is lost in the presence of malic acid (PubMed:30100914). Expression is increased with pH changes from 2.5 to 3.5 in the presence of a limiting concentration of sucrose, 50 mM (PubMed:30100914). Natural phenols present in apple fruits such as chlorogenic acid or the flavonoid epicatechin modulate patulin biosynthesis. They increase expression in the absence of sucrose, have little impact in the presence of 15 mM sucrose, and decrease expression in 175 mM sucrose (PubMed:30100914). Expression is positively regulated by the patulin cluster-specific transcription factor patL (PubMed:25625822). Finally, expression is also positively regulated by the velvet family proteins transcription regulators veA, velB, velC, but not vosA (PubMed:30680886).</text>
</comment>
<comment type="disruption phenotype">
    <text evidence="10">Strongly reduces the production of patulin.</text>
</comment>
<comment type="biotechnology">
    <text evidence="3 4 7">Patulin was originally used as an antibiotic and specifically trialed to be used against the common cold, but it is no longer used for that purpose since it has been shown to induce immunological, neurological and gastrointestinal effects (PubMed:15082620). Genotoxic effects of patulin with dose-dependent increase in DNA strand breaks in brain, liver and kidneys have been detected in mice (PubMed:22222931). However, more recently, it has been proposed that patulin might also have anti-tumor properties (PubMed:26619846).</text>
</comment>
<comment type="similarity">
    <text evidence="12">Belongs to the zinc-containing alcohol dehydrogenase family.</text>
</comment>
<protein>
    <recommendedName>
        <fullName evidence="11">Alcohol dehydrogenase patD</fullName>
        <ecNumber evidence="10">1.1.1.-</ecNumber>
    </recommendedName>
    <alternativeName>
        <fullName evidence="11">Patulin biosynthesis cluster protein D</fullName>
    </alternativeName>
</protein>
<reference key="1">
    <citation type="journal article" date="2014" name="Int. J. Food Microbiol.">
        <title>Sequencing, physical organization and kinetic expression of the patulin biosynthetic gene cluster from Penicillium expansum.</title>
        <authorList>
            <person name="Tannous J."/>
            <person name="El Khoury R."/>
            <person name="Snini S.P."/>
            <person name="Lippi Y."/>
            <person name="El Khoury A."/>
            <person name="Atoui A."/>
            <person name="Lteif R."/>
            <person name="Oswald I.P."/>
            <person name="Puel O."/>
        </authorList>
    </citation>
    <scope>NUCLEOTIDE SEQUENCE [GENOMIC DNA]</scope>
    <scope>IDENTIFICATION</scope>
    <scope>FUNCTION</scope>
    <scope>INDUCTION</scope>
    <scope>PATHWAY</scope>
    <source>
        <strain>NRRL 35695</strain>
    </source>
</reference>
<reference key="2">
    <citation type="journal article" date="2015" name="Mol. Plant Microbe Interact.">
        <title>Genome, transcriptome, and functional analyses of Penicillium expansum provide new insights into secondary metabolism and pathogenicity.</title>
        <authorList>
            <person name="Ballester A.R."/>
            <person name="Marcet-Houben M."/>
            <person name="Levin E."/>
            <person name="Sela N."/>
            <person name="Selma-Lazaro C."/>
            <person name="Carmona L."/>
            <person name="Wisniewski M."/>
            <person name="Droby S."/>
            <person name="Gonzalez-Candelas L."/>
            <person name="Gabaldon T."/>
        </authorList>
    </citation>
    <scope>NUCLEOTIDE SEQUENCE [LARGE SCALE GENOMIC DNA]</scope>
    <source>
        <strain>MD-8</strain>
    </source>
</reference>
<reference key="3">
    <citation type="journal article" date="2004" name="Int. J. Epidemiol.">
        <title>Clinical trial of patulin in the common cold. 1944.</title>
        <authorList>
            <consortium name="Patulin Clinical Trials Committee, Medical Research Council"/>
        </authorList>
    </citation>
    <scope>BIOTECHNOLOGY</scope>
</reference>
<reference key="4">
    <citation type="journal article" date="2012" name="Food Chem. Toxicol.">
        <title>DNA damage in organs of mice treated acutely with patulin, a known mycotoxin.</title>
        <authorList>
            <person name="de Melo F.T."/>
            <person name="de Oliveira I.M."/>
            <person name="Greggio S."/>
            <person name="Dacosta J.C."/>
            <person name="Guecheva T.N."/>
            <person name="Saffi J."/>
            <person name="Henriques J.A."/>
            <person name="Rosa R.M."/>
        </authorList>
    </citation>
    <scope>BIOTECHNOLOGY</scope>
</reference>
<reference key="5">
    <citation type="journal article" date="2016" name="Tumor Biol.">
        <title>The potential effect of patulin on mice bearing melanoma cells: an anti-tumour or carcinogenic effect?</title>
        <authorList>
            <person name="Boussabbeh M."/>
            <person name="Ben Salem I."/>
            <person name="Rjiba-Touati K."/>
            <person name="Bouyahya C."/>
            <person name="Neffati F."/>
            <person name="Najjar M.F."/>
            <person name="Bacha H."/>
            <person name="Abid-Essefi S."/>
        </authorList>
    </citation>
    <scope>BIOTECHNOLOGY</scope>
</reference>
<reference key="6">
    <citation type="journal article" date="2017" name="Mol. Plant Pathol.">
        <title>LaeA regulation of secondary metabolism modulates virulence in Penicillium expansum and is mediated by sucrose.</title>
        <authorList>
            <person name="Kumar D."/>
            <person name="Barad S."/>
            <person name="Chen Y."/>
            <person name="Luo X."/>
            <person name="Tannous J."/>
            <person name="Dubey A."/>
            <person name="Glam Matana N."/>
            <person name="Tian S."/>
            <person name="Li B."/>
            <person name="Keller N."/>
            <person name="Prusky D."/>
        </authorList>
    </citation>
    <scope>INDUCTION</scope>
</reference>
<reference key="7">
    <citation type="journal article" date="2018" name="Front. Plant Sci.">
        <title>Apple intrinsic factors modulating the global regulator, LaeA, the patulin gene cluster and patulin accumulation during fruit colonization by Penicillium expansum.</title>
        <authorList>
            <person name="Kumar D."/>
            <person name="Tannous J."/>
            <person name="Sionov E."/>
            <person name="Keller N."/>
            <person name="Prusky D."/>
        </authorList>
    </citation>
    <scope>FUNCTION</scope>
    <scope>INDUCTION</scope>
</reference>
<reference key="8">
    <citation type="journal article" date="2015" name="Mol. Plant Microbe Interact.">
        <title>Genomic characterization reveals insights into patulin biosynthesis and pathogenicity in Penicillium species.</title>
        <authorList>
            <person name="Li B."/>
            <person name="Zong Y."/>
            <person name="Du Z."/>
            <person name="Chen Y."/>
            <person name="Zhang Z."/>
            <person name="Qin G."/>
            <person name="Zhao W."/>
            <person name="Tian S."/>
        </authorList>
    </citation>
    <scope>FUNCTION</scope>
    <scope>INDUCTION</scope>
</reference>
<reference key="9">
    <citation type="journal article" date="2019" name="Environ. Microbiol.">
        <title>Dissection of patulin biosynthesis, spatial control and regulation mechanism in Penicillium expansum.</title>
        <authorList>
            <person name="Li B."/>
            <person name="Chen Y."/>
            <person name="Zong Y."/>
            <person name="Shang Y."/>
            <person name="Zhang Z."/>
            <person name="Xu X."/>
            <person name="Wang X."/>
            <person name="Long M."/>
            <person name="Tian S."/>
        </authorList>
    </citation>
    <scope>FUNCTION</scope>
    <scope>DISRUPTION PHENOTYPE</scope>
    <scope>SUBCELLULAR LOCATION</scope>
    <scope>CATALYTIC ACTIVITY</scope>
    <scope>INDUCTION</scope>
    <scope>PATHWAY</scope>
</reference>
<accession>A0A075TMP0</accession>
<dbReference type="EC" id="1.1.1.-" evidence="10"/>
<dbReference type="EMBL" id="KF899892">
    <property type="protein sequence ID" value="AIG62135.1"/>
    <property type="molecule type" value="Genomic_DNA"/>
</dbReference>
<dbReference type="EMBL" id="JQFZ01000262">
    <property type="protein sequence ID" value="KGO52631.1"/>
    <property type="molecule type" value="Genomic_DNA"/>
</dbReference>
<dbReference type="RefSeq" id="XP_016595361.1">
    <property type="nucleotide sequence ID" value="XM_016745548.1"/>
</dbReference>
<dbReference type="SMR" id="A0A075TMP0"/>
<dbReference type="STRING" id="27334.A0A075TMP0"/>
<dbReference type="GeneID" id="27680968"/>
<dbReference type="VEuPathDB" id="FungiDB:PEXP_094360"/>
<dbReference type="HOGENOM" id="CLU_026673_20_1_1"/>
<dbReference type="OrthoDB" id="1560166at2759"/>
<dbReference type="PhylomeDB" id="A0A075TMP0"/>
<dbReference type="BioCyc" id="MetaCyc:MONOMER-21162"/>
<dbReference type="UniPathway" id="UPA00918"/>
<dbReference type="Proteomes" id="UP000030143">
    <property type="component" value="Unassembled WGS sequence"/>
</dbReference>
<dbReference type="GO" id="GO:0005829">
    <property type="term" value="C:cytosol"/>
    <property type="evidence" value="ECO:0000314"/>
    <property type="project" value="GO_Central"/>
</dbReference>
<dbReference type="GO" id="GO:0004022">
    <property type="term" value="F:alcohol dehydrogenase (NAD+) activity"/>
    <property type="evidence" value="ECO:0007669"/>
    <property type="project" value="TreeGrafter"/>
</dbReference>
<dbReference type="GO" id="GO:0008106">
    <property type="term" value="F:alcohol dehydrogenase (NADP+) activity"/>
    <property type="evidence" value="ECO:0000314"/>
    <property type="project" value="UniProt"/>
</dbReference>
<dbReference type="GO" id="GO:0046872">
    <property type="term" value="F:metal ion binding"/>
    <property type="evidence" value="ECO:0007669"/>
    <property type="project" value="UniProtKB-KW"/>
</dbReference>
<dbReference type="GO" id="GO:0016491">
    <property type="term" value="F:oxidoreductase activity"/>
    <property type="evidence" value="ECO:0000314"/>
    <property type="project" value="GO_Central"/>
</dbReference>
<dbReference type="GO" id="GO:0016218">
    <property type="term" value="F:polyketide synthase activity"/>
    <property type="evidence" value="ECO:0000314"/>
    <property type="project" value="UniProt"/>
</dbReference>
<dbReference type="GO" id="GO:0140723">
    <property type="term" value="P:patulin biosynthetic process"/>
    <property type="evidence" value="ECO:0000314"/>
    <property type="project" value="GO_Central"/>
</dbReference>
<dbReference type="FunFam" id="3.40.50.720:FF:000039">
    <property type="entry name" value="Alcohol dehydrogenase AdhP"/>
    <property type="match status" value="1"/>
</dbReference>
<dbReference type="Gene3D" id="3.90.180.10">
    <property type="entry name" value="Medium-chain alcohol dehydrogenases, catalytic domain"/>
    <property type="match status" value="1"/>
</dbReference>
<dbReference type="Gene3D" id="3.40.50.720">
    <property type="entry name" value="NAD(P)-binding Rossmann-like Domain"/>
    <property type="match status" value="1"/>
</dbReference>
<dbReference type="InterPro" id="IPR013149">
    <property type="entry name" value="ADH-like_C"/>
</dbReference>
<dbReference type="InterPro" id="IPR013154">
    <property type="entry name" value="ADH-like_N"/>
</dbReference>
<dbReference type="InterPro" id="IPR011032">
    <property type="entry name" value="GroES-like_sf"/>
</dbReference>
<dbReference type="InterPro" id="IPR036291">
    <property type="entry name" value="NAD(P)-bd_dom_sf"/>
</dbReference>
<dbReference type="InterPro" id="IPR020843">
    <property type="entry name" value="PKS_ER"/>
</dbReference>
<dbReference type="PANTHER" id="PTHR42940">
    <property type="entry name" value="ALCOHOL DEHYDROGENASE 1-RELATED"/>
    <property type="match status" value="1"/>
</dbReference>
<dbReference type="PANTHER" id="PTHR42940:SF7">
    <property type="entry name" value="ALCOHOL DEHYDROGENASE-LIKE N-TERMINAL DOMAIN-CONTAINING PROTEIN"/>
    <property type="match status" value="1"/>
</dbReference>
<dbReference type="Pfam" id="PF08240">
    <property type="entry name" value="ADH_N"/>
    <property type="match status" value="1"/>
</dbReference>
<dbReference type="Pfam" id="PF00107">
    <property type="entry name" value="ADH_zinc_N"/>
    <property type="match status" value="1"/>
</dbReference>
<dbReference type="SMART" id="SM00829">
    <property type="entry name" value="PKS_ER"/>
    <property type="match status" value="1"/>
</dbReference>
<dbReference type="SUPFAM" id="SSF50129">
    <property type="entry name" value="GroES-like"/>
    <property type="match status" value="1"/>
</dbReference>
<dbReference type="SUPFAM" id="SSF51735">
    <property type="entry name" value="NAD(P)-binding Rossmann-fold domains"/>
    <property type="match status" value="1"/>
</dbReference>